<sequence>MSEDIRRGPGRPPKKRVVPNFERKGILEKPVRPQSRLEFSYDNPLIFKNLFIYFKNLKSKNILVRCTPTEITFFSRDQSQASFVIATIDGKNVNHYYASDVFWLGINRELVEKMFNSIDRSFLKITIVHRYDKPETLFFIFTDFDIDKECTYQITVSEPELDMDLIEMEKSISEERLKNYPLRWEFTSKQLKKTFSDLSNYTELVTIEKLGGDTPLHLYFQKFNSISYHEMYKSSNKINLTSTIPKSQVFQINVKIAHIKSLASAMVTDKIRILCEENGNLIFQSEMDALLLNTITLNNMI</sequence>
<reference key="1">
    <citation type="submission" date="2003-03" db="EMBL/GenBank/DDBJ databases">
        <title>African swine fever virus genomes.</title>
        <authorList>
            <person name="Kutish G.F."/>
            <person name="Rock D.L."/>
        </authorList>
    </citation>
    <scope>NUCLEOTIDE SEQUENCE [LARGE SCALE GENOMIC DNA]</scope>
</reference>
<name>VF301_ASFK5</name>
<accession>P0CAC8</accession>
<evidence type="ECO:0000250" key="1">
    <source>
        <dbReference type="UniProtKB" id="Q65196"/>
    </source>
</evidence>
<evidence type="ECO:0000305" key="2"/>
<organism>
    <name type="scientific">African swine fever virus (isolate Pig/Kenya/KEN-50/1950)</name>
    <name type="common">ASFV</name>
    <dbReference type="NCBI Taxonomy" id="561445"/>
    <lineage>
        <taxon>Viruses</taxon>
        <taxon>Varidnaviria</taxon>
        <taxon>Bamfordvirae</taxon>
        <taxon>Nucleocytoviricota</taxon>
        <taxon>Pokkesviricetes</taxon>
        <taxon>Asfuvirales</taxon>
        <taxon>Asfarviridae</taxon>
        <taxon>Asfivirus</taxon>
        <taxon>African swine fever virus</taxon>
    </lineage>
</organism>
<keyword id="KW-0945">Host-virus interaction</keyword>
<keyword id="KW-1090">Inhibition of host innate immune response by virus</keyword>
<keyword id="KW-1092">Inhibition of host IRF3 by virus</keyword>
<keyword id="KW-1113">Inhibition of host RLR pathway by virus</keyword>
<keyword id="KW-0426">Late protein</keyword>
<keyword id="KW-0899">Viral immunoevasion</keyword>
<proteinExistence type="inferred from homology"/>
<dbReference type="EMBL" id="AY261360">
    <property type="status" value="NOT_ANNOTATED_CDS"/>
    <property type="molecule type" value="Genomic_DNA"/>
</dbReference>
<dbReference type="SMR" id="P0CAC8"/>
<dbReference type="Proteomes" id="UP000000861">
    <property type="component" value="Segment"/>
</dbReference>
<dbReference type="GO" id="GO:0039548">
    <property type="term" value="P:symbiont-mediated suppression of host cytoplasmic pattern recognition receptor signaling pathway via inhibition of IRF3 activity"/>
    <property type="evidence" value="ECO:0007669"/>
    <property type="project" value="UniProtKB-KW"/>
</dbReference>
<dbReference type="Gene3D" id="3.70.10.10">
    <property type="match status" value="1"/>
</dbReference>
<dbReference type="InterPro" id="IPR046938">
    <property type="entry name" value="DNA_clamp_sf"/>
</dbReference>
<dbReference type="SUPFAM" id="SSF55979">
    <property type="entry name" value="DNA clamp"/>
    <property type="match status" value="1"/>
</dbReference>
<comment type="function">
    <text evidence="1">Plays a role in the inhibition of host innate immune system by acting as a negatively regulator of type I interferon production. Mechanistically, interacts with and prevents host IRF3 nuclear localization to inhibit its transcriptional activity.</text>
</comment>
<comment type="subunit">
    <text evidence="1">Interacts with host IRF3.</text>
</comment>
<comment type="induction">
    <text evidence="2">Expressed in the late phase of the viral replicative cycle.</text>
</comment>
<comment type="similarity">
    <text evidence="2">Belongs to the asfivirus E301R family.</text>
</comment>
<protein>
    <recommendedName>
        <fullName>Uncharacterized protein E301R</fullName>
    </recommendedName>
</protein>
<organismHost>
    <name type="scientific">Ornithodoros</name>
    <name type="common">relapsing fever ticks</name>
    <dbReference type="NCBI Taxonomy" id="6937"/>
</organismHost>
<organismHost>
    <name type="scientific">Phacochoerus aethiopicus</name>
    <name type="common">Warthog</name>
    <dbReference type="NCBI Taxonomy" id="85517"/>
</organismHost>
<organismHost>
    <name type="scientific">Phacochoerus africanus</name>
    <name type="common">Warthog</name>
    <dbReference type="NCBI Taxonomy" id="41426"/>
</organismHost>
<organismHost>
    <name type="scientific">Potamochoerus larvatus</name>
    <name type="common">Bushpig</name>
    <dbReference type="NCBI Taxonomy" id="273792"/>
</organismHost>
<organismHost>
    <name type="scientific">Sus scrofa</name>
    <name type="common">Pig</name>
    <dbReference type="NCBI Taxonomy" id="9823"/>
</organismHost>
<feature type="chain" id="PRO_0000373630" description="Uncharacterized protein E301R">
    <location>
        <begin position="1"/>
        <end position="301"/>
    </location>
</feature>
<gene>
    <name type="ordered locus">Ken-140</name>
</gene>